<keyword id="KW-0067">ATP-binding</keyword>
<keyword id="KW-0963">Cytoplasm</keyword>
<keyword id="KW-0436">Ligase</keyword>
<keyword id="KW-0547">Nucleotide-binding</keyword>
<keyword id="KW-0658">Purine biosynthesis</keyword>
<keyword id="KW-1185">Reference proteome</keyword>
<gene>
    <name evidence="1" type="primary">purM</name>
    <name type="ordered locus">HCH_01906</name>
</gene>
<dbReference type="EC" id="6.3.3.1" evidence="1"/>
<dbReference type="EMBL" id="CP000155">
    <property type="protein sequence ID" value="ABC28741.1"/>
    <property type="molecule type" value="Genomic_DNA"/>
</dbReference>
<dbReference type="RefSeq" id="WP_011395812.1">
    <property type="nucleotide sequence ID" value="NC_007645.1"/>
</dbReference>
<dbReference type="SMR" id="Q2SKT3"/>
<dbReference type="STRING" id="349521.HCH_01906"/>
<dbReference type="KEGG" id="hch:HCH_01906"/>
<dbReference type="eggNOG" id="COG0150">
    <property type="taxonomic scope" value="Bacteria"/>
</dbReference>
<dbReference type="HOGENOM" id="CLU_047116_0_0_6"/>
<dbReference type="OrthoDB" id="9777881at2"/>
<dbReference type="UniPathway" id="UPA00074">
    <property type="reaction ID" value="UER00129"/>
</dbReference>
<dbReference type="Proteomes" id="UP000000238">
    <property type="component" value="Chromosome"/>
</dbReference>
<dbReference type="GO" id="GO:0005829">
    <property type="term" value="C:cytosol"/>
    <property type="evidence" value="ECO:0007669"/>
    <property type="project" value="TreeGrafter"/>
</dbReference>
<dbReference type="GO" id="GO:0005524">
    <property type="term" value="F:ATP binding"/>
    <property type="evidence" value="ECO:0007669"/>
    <property type="project" value="UniProtKB-KW"/>
</dbReference>
<dbReference type="GO" id="GO:0004637">
    <property type="term" value="F:phosphoribosylamine-glycine ligase activity"/>
    <property type="evidence" value="ECO:0007669"/>
    <property type="project" value="TreeGrafter"/>
</dbReference>
<dbReference type="GO" id="GO:0004641">
    <property type="term" value="F:phosphoribosylformylglycinamidine cyclo-ligase activity"/>
    <property type="evidence" value="ECO:0007669"/>
    <property type="project" value="UniProtKB-UniRule"/>
</dbReference>
<dbReference type="GO" id="GO:0006189">
    <property type="term" value="P:'de novo' IMP biosynthetic process"/>
    <property type="evidence" value="ECO:0007669"/>
    <property type="project" value="UniProtKB-UniRule"/>
</dbReference>
<dbReference type="GO" id="GO:0046084">
    <property type="term" value="P:adenine biosynthetic process"/>
    <property type="evidence" value="ECO:0007669"/>
    <property type="project" value="TreeGrafter"/>
</dbReference>
<dbReference type="CDD" id="cd02196">
    <property type="entry name" value="PurM"/>
    <property type="match status" value="1"/>
</dbReference>
<dbReference type="FunFam" id="3.30.1330.10:FF:000001">
    <property type="entry name" value="Phosphoribosylformylglycinamidine cyclo-ligase"/>
    <property type="match status" value="1"/>
</dbReference>
<dbReference type="FunFam" id="3.90.650.10:FF:000001">
    <property type="entry name" value="Phosphoribosylformylglycinamidine cyclo-ligase"/>
    <property type="match status" value="1"/>
</dbReference>
<dbReference type="Gene3D" id="3.90.650.10">
    <property type="entry name" value="PurM-like C-terminal domain"/>
    <property type="match status" value="1"/>
</dbReference>
<dbReference type="Gene3D" id="3.30.1330.10">
    <property type="entry name" value="PurM-like, N-terminal domain"/>
    <property type="match status" value="1"/>
</dbReference>
<dbReference type="HAMAP" id="MF_00741">
    <property type="entry name" value="AIRS"/>
    <property type="match status" value="1"/>
</dbReference>
<dbReference type="InterPro" id="IPR010918">
    <property type="entry name" value="PurM-like_C_dom"/>
</dbReference>
<dbReference type="InterPro" id="IPR036676">
    <property type="entry name" value="PurM-like_C_sf"/>
</dbReference>
<dbReference type="InterPro" id="IPR016188">
    <property type="entry name" value="PurM-like_N"/>
</dbReference>
<dbReference type="InterPro" id="IPR036921">
    <property type="entry name" value="PurM-like_N_sf"/>
</dbReference>
<dbReference type="InterPro" id="IPR004733">
    <property type="entry name" value="PurM_cligase"/>
</dbReference>
<dbReference type="NCBIfam" id="TIGR00878">
    <property type="entry name" value="purM"/>
    <property type="match status" value="1"/>
</dbReference>
<dbReference type="PANTHER" id="PTHR10520:SF12">
    <property type="entry name" value="TRIFUNCTIONAL PURINE BIOSYNTHETIC PROTEIN ADENOSINE-3"/>
    <property type="match status" value="1"/>
</dbReference>
<dbReference type="PANTHER" id="PTHR10520">
    <property type="entry name" value="TRIFUNCTIONAL PURINE BIOSYNTHETIC PROTEIN ADENOSINE-3-RELATED"/>
    <property type="match status" value="1"/>
</dbReference>
<dbReference type="Pfam" id="PF00586">
    <property type="entry name" value="AIRS"/>
    <property type="match status" value="1"/>
</dbReference>
<dbReference type="Pfam" id="PF02769">
    <property type="entry name" value="AIRS_C"/>
    <property type="match status" value="1"/>
</dbReference>
<dbReference type="SUPFAM" id="SSF56042">
    <property type="entry name" value="PurM C-terminal domain-like"/>
    <property type="match status" value="1"/>
</dbReference>
<dbReference type="SUPFAM" id="SSF55326">
    <property type="entry name" value="PurM N-terminal domain-like"/>
    <property type="match status" value="1"/>
</dbReference>
<reference key="1">
    <citation type="journal article" date="2005" name="Nucleic Acids Res.">
        <title>Genomic blueprint of Hahella chejuensis, a marine microbe producing an algicidal agent.</title>
        <authorList>
            <person name="Jeong H."/>
            <person name="Yim J.H."/>
            <person name="Lee C."/>
            <person name="Choi S.-H."/>
            <person name="Park Y.K."/>
            <person name="Yoon S.H."/>
            <person name="Hur C.-G."/>
            <person name="Kang H.-Y."/>
            <person name="Kim D."/>
            <person name="Lee H.H."/>
            <person name="Park K.H."/>
            <person name="Park S.-H."/>
            <person name="Park H.-S."/>
            <person name="Lee H.K."/>
            <person name="Oh T.K."/>
            <person name="Kim J.F."/>
        </authorList>
    </citation>
    <scope>NUCLEOTIDE SEQUENCE [LARGE SCALE GENOMIC DNA]</scope>
    <source>
        <strain>KCTC 2396</strain>
    </source>
</reference>
<accession>Q2SKT3</accession>
<feature type="chain" id="PRO_0000258360" description="Phosphoribosylformylglycinamidine cyclo-ligase">
    <location>
        <begin position="1"/>
        <end position="352"/>
    </location>
</feature>
<name>PUR5_HAHCH</name>
<sequence>MTASNDKPSLSYRDAGVDIDAGNALVQRIKGAAQATRRPEVMAGLGGFGALFELPKGYQEPVLVSGTDGVGTKLRLAMQMNKHDTIGIDLVAMCVNDLIVQGAEPLFFLDYYATGKLSVDVAATVVTGIGEGCSQAGCSLVGGETAEMPGMYEGDDYDLAGFCVGIVEKSKIIDGSLVKPGDVLIGLASSGVHSNGYSLVRKIVEVSGADLNQPFGDATLGEALLAPTRIYVKPLLELIRQTPVHALSHITGGGLLENLPRVLPAHAKAVVDVNAFEMPELFNWLQKNGNVAWNEMFRTFNCGIGMVVCVPADSADKALELLSAAGETVFRIGSIETHTEEEPVVELKGLVD</sequence>
<organism>
    <name type="scientific">Hahella chejuensis (strain KCTC 2396)</name>
    <dbReference type="NCBI Taxonomy" id="349521"/>
    <lineage>
        <taxon>Bacteria</taxon>
        <taxon>Pseudomonadati</taxon>
        <taxon>Pseudomonadota</taxon>
        <taxon>Gammaproteobacteria</taxon>
        <taxon>Oceanospirillales</taxon>
        <taxon>Hahellaceae</taxon>
        <taxon>Hahella</taxon>
    </lineage>
</organism>
<comment type="catalytic activity">
    <reaction evidence="1">
        <text>2-formamido-N(1)-(5-O-phospho-beta-D-ribosyl)acetamidine + ATP = 5-amino-1-(5-phospho-beta-D-ribosyl)imidazole + ADP + phosphate + H(+)</text>
        <dbReference type="Rhea" id="RHEA:23032"/>
        <dbReference type="ChEBI" id="CHEBI:15378"/>
        <dbReference type="ChEBI" id="CHEBI:30616"/>
        <dbReference type="ChEBI" id="CHEBI:43474"/>
        <dbReference type="ChEBI" id="CHEBI:137981"/>
        <dbReference type="ChEBI" id="CHEBI:147287"/>
        <dbReference type="ChEBI" id="CHEBI:456216"/>
        <dbReference type="EC" id="6.3.3.1"/>
    </reaction>
</comment>
<comment type="pathway">
    <text evidence="1">Purine metabolism; IMP biosynthesis via de novo pathway; 5-amino-1-(5-phospho-D-ribosyl)imidazole from N(2)-formyl-N(1)-(5-phospho-D-ribosyl)glycinamide: step 2/2.</text>
</comment>
<comment type="subcellular location">
    <subcellularLocation>
        <location evidence="1">Cytoplasm</location>
    </subcellularLocation>
</comment>
<comment type="similarity">
    <text evidence="1">Belongs to the AIR synthase family.</text>
</comment>
<proteinExistence type="inferred from homology"/>
<protein>
    <recommendedName>
        <fullName evidence="1">Phosphoribosylformylglycinamidine cyclo-ligase</fullName>
        <ecNumber evidence="1">6.3.3.1</ecNumber>
    </recommendedName>
    <alternativeName>
        <fullName evidence="1">AIR synthase</fullName>
    </alternativeName>
    <alternativeName>
        <fullName evidence="1">AIRS</fullName>
    </alternativeName>
    <alternativeName>
        <fullName evidence="1">Phosphoribosyl-aminoimidazole synthetase</fullName>
    </alternativeName>
</protein>
<evidence type="ECO:0000255" key="1">
    <source>
        <dbReference type="HAMAP-Rule" id="MF_00741"/>
    </source>
</evidence>